<sequence>MSSKAKLEEIPITVDFSGGLEMLFDNQRRHSISLPAKDTEGKPVTIAFLIDYICKKLMKDPRTDLFVLDNHIRPGILVLINDADWELEGEEAYEIQPNDNILFVSTLHGG</sequence>
<gene>
    <name evidence="2" type="primary">URM1</name>
    <name type="ORF">CTHT_0062030</name>
</gene>
<reference key="1">
    <citation type="journal article" date="2011" name="Cell">
        <title>Insight into structure and assembly of the nuclear pore complex by utilizing the genome of a eukaryotic thermophile.</title>
        <authorList>
            <person name="Amlacher S."/>
            <person name="Sarges P."/>
            <person name="Flemming D."/>
            <person name="van Noort V."/>
            <person name="Kunze R."/>
            <person name="Devos D.P."/>
            <person name="Arumugam M."/>
            <person name="Bork P."/>
            <person name="Hurt E."/>
        </authorList>
    </citation>
    <scope>NUCLEOTIDE SEQUENCE [LARGE SCALE GENOMIC DNA]</scope>
    <source>
        <strain>DSM 1495 / CBS 144.50 / IMI 039719</strain>
    </source>
</reference>
<reference evidence="5 6" key="2">
    <citation type="journal article" date="2020" name="EMBO J.">
        <title>Molecular basis for the bifunctional Uba4-Urm1 sulfur-relay system in tRNA thiolation and ubiquitin-like conjugation.</title>
        <authorList>
            <person name="Pabis M."/>
            <person name="Termathe M."/>
            <person name="Ravichandran K.E."/>
            <person name="Kienast S.D."/>
            <person name="Krutyholowa R."/>
            <person name="Sokolowski M."/>
            <person name="Jankowska U."/>
            <person name="Grudnik P."/>
            <person name="Leidel S.A."/>
            <person name="Glatt S."/>
        </authorList>
    </citation>
    <scope>X-RAY CRYSTALLOGRAPHY (3.15 ANGSTROMS) OF 10-110 IN COMPLEX WITH UBA4</scope>
    <scope>THIOCARBOXYLATION AT GLY-110</scope>
</reference>
<reference evidence="7" key="3">
    <citation type="journal article" date="2022" name="EMBO J.">
        <title>E2/E3-independent ubiquitin-like protein conjugation by Urm1 is directly coupled to cysteine persulfidation.</title>
        <authorList>
            <person name="Ravichandran K.E."/>
            <person name="Kaduhr L."/>
            <person name="Skupien-Rabian B."/>
            <person name="Shvetsova E."/>
            <person name="Sokolowski M."/>
            <person name="Krutyholowa R."/>
            <person name="Kwasna D."/>
            <person name="Brachmann C."/>
            <person name="Lin S."/>
            <person name="Guzman Perez S."/>
            <person name="Wilk P."/>
            <person name="Koesters M."/>
            <person name="Grudnik P."/>
            <person name="Jankowska U."/>
            <person name="Leidel S.A."/>
            <person name="Schaffrath R."/>
            <person name="Glatt S."/>
        </authorList>
    </citation>
    <scope>X-RAY CRYSTALLOGRAPHY (2.50 ANGSTROMS) IN COMPLEX WITH AHP1</scope>
</reference>
<proteinExistence type="evidence at protein level"/>
<comment type="function">
    <text evidence="1 2 3 4">Acts as a sulfur carrier required for 2-thiolation of mcm(5)S(2)U at tRNA wobble positions of cytosolic tRNA(Lys), tRNA(Glu) and tRNA(Gln). Serves as sulfur donor in tRNA 2-thiolation reaction by being thiocarboxylated (-COSH) at its C-terminus by the MOCS3 homolog UBA4. The sulfur is then transferred to tRNA to form 2-thiolation of mcm(5)S(2)U. Prior mcm(5) tRNA modification by the elongator complex is required for 2-thiolation (By similarity) (PubMed:32901956). Also acts as a ubiquitin-like protein (UBL) that is covalently conjugated via an isopeptide bond to lysine residues of target proteins such as AHP1. Conjugation does not depend on the canonical cascade of E2 ubiquitin-conjugating enzymes and/or E3 ligases. The conjugation reaction requires a thiocarboxylated C-terminus of URM1 and a peroxidatic cysteine in the target protein, as the sulfur atom of the URM1 thiocarboxyl group is transferred to redox-active cysteine residues in the target protein. Oxidative stress specifically induces the formation of UBL-protein conjugates (By similarity) (PubMed:32901956, PubMed:36102610). Covalent modification with URM1 promotes the phase separation of a wide range of proteins into condensates like stress granules (By similarity).</text>
</comment>
<comment type="pathway">
    <text evidence="2">tRNA modification; 5-methoxycarbonylmethyl-2-thiouridine-tRNA biosynthesis.</text>
</comment>
<comment type="subunit">
    <text evidence="2 4">Homodimer; homodimerization may provide an autoprotection to the highly active C-terminal residue before attacking its substrates. Forms a conjugate with the target protein AHP1.</text>
</comment>
<comment type="subcellular location">
    <subcellularLocation>
        <location evidence="2">Cytoplasm</location>
    </subcellularLocation>
</comment>
<comment type="PTM">
    <text evidence="2 3">C-terminal thiocarboxylation occurs in 2 steps, it is first acyl-adenylated (-COAMP) via the hesA/moeB/thiF part of UBA4, then thiocarboxylated (-COSH) via the rhodanese domain of UBA4.</text>
</comment>
<comment type="similarity">
    <text evidence="2">Belongs to the URM1 family.</text>
</comment>
<organism>
    <name type="scientific">Chaetomium thermophilum (strain DSM 1495 / CBS 144.50 / IMI 039719)</name>
    <name type="common">Thermochaetoides thermophila</name>
    <dbReference type="NCBI Taxonomy" id="759272"/>
    <lineage>
        <taxon>Eukaryota</taxon>
        <taxon>Fungi</taxon>
        <taxon>Dikarya</taxon>
        <taxon>Ascomycota</taxon>
        <taxon>Pezizomycotina</taxon>
        <taxon>Sordariomycetes</taxon>
        <taxon>Sordariomycetidae</taxon>
        <taxon>Sordariales</taxon>
        <taxon>Chaetomiaceae</taxon>
        <taxon>Thermochaetoides</taxon>
    </lineage>
</organism>
<keyword id="KW-0002">3D-structure</keyword>
<keyword id="KW-0963">Cytoplasm</keyword>
<keyword id="KW-1017">Isopeptide bond</keyword>
<keyword id="KW-0479">Metal-binding</keyword>
<keyword id="KW-1185">Reference proteome</keyword>
<keyword id="KW-0819">tRNA processing</keyword>
<keyword id="KW-0833">Ubl conjugation pathway</keyword>
<keyword id="KW-0862">Zinc</keyword>
<evidence type="ECO:0000250" key="1">
    <source>
        <dbReference type="UniProtKB" id="P40554"/>
    </source>
</evidence>
<evidence type="ECO:0000255" key="2">
    <source>
        <dbReference type="HAMAP-Rule" id="MF_03048"/>
    </source>
</evidence>
<evidence type="ECO:0000269" key="3">
    <source>
    </source>
</evidence>
<evidence type="ECO:0000269" key="4">
    <source>
    </source>
</evidence>
<evidence type="ECO:0007744" key="5">
    <source>
        <dbReference type="PDB" id="6YUC"/>
    </source>
</evidence>
<evidence type="ECO:0007744" key="6">
    <source>
        <dbReference type="PDB" id="6Z6S"/>
    </source>
</evidence>
<evidence type="ECO:0007744" key="7">
    <source>
        <dbReference type="PDB" id="7Q5N"/>
    </source>
</evidence>
<evidence type="ECO:0007829" key="8">
    <source>
        <dbReference type="PDB" id="6YUC"/>
    </source>
</evidence>
<evidence type="ECO:0007829" key="9">
    <source>
        <dbReference type="PDB" id="7Q5N"/>
    </source>
</evidence>
<name>URM1_CHATD</name>
<feature type="chain" id="PRO_0000461631" description="Ubiquitin-related modifier 1">
    <location>
        <begin position="1"/>
        <end position="110"/>
    </location>
</feature>
<feature type="modified residue" description="1-thioglycine" evidence="2 3">
    <location>
        <position position="110"/>
    </location>
</feature>
<feature type="cross-link" description="Glycyl lysine isopeptide (Gly-Lys) (interchain with K-? in acceptor proteins)" evidence="2 4">
    <location>
        <position position="110"/>
    </location>
</feature>
<feature type="strand" evidence="9">
    <location>
        <begin position="9"/>
        <end position="17"/>
    </location>
</feature>
<feature type="helix" evidence="9">
    <location>
        <begin position="20"/>
        <end position="23"/>
    </location>
</feature>
<feature type="turn" evidence="9">
    <location>
        <begin position="24"/>
        <end position="26"/>
    </location>
</feature>
<feature type="strand" evidence="9">
    <location>
        <begin position="30"/>
        <end position="37"/>
    </location>
</feature>
<feature type="strand" evidence="8">
    <location>
        <begin position="41"/>
        <end position="43"/>
    </location>
</feature>
<feature type="helix" evidence="9">
    <location>
        <begin position="46"/>
        <end position="56"/>
    </location>
</feature>
<feature type="helix" evidence="9">
    <location>
        <begin position="63"/>
        <end position="65"/>
    </location>
</feature>
<feature type="strand" evidence="9">
    <location>
        <begin position="76"/>
        <end position="80"/>
    </location>
</feature>
<feature type="turn" evidence="8">
    <location>
        <begin position="85"/>
        <end position="89"/>
    </location>
</feature>
<feature type="strand" evidence="9">
    <location>
        <begin position="99"/>
        <end position="105"/>
    </location>
</feature>
<protein>
    <recommendedName>
        <fullName evidence="2">Ubiquitin-related modifier 1</fullName>
    </recommendedName>
</protein>
<dbReference type="EMBL" id="GL988046">
    <property type="protein sequence ID" value="EGS18188.1"/>
    <property type="molecule type" value="Genomic_DNA"/>
</dbReference>
<dbReference type="RefSeq" id="XP_006696519.1">
    <property type="nucleotide sequence ID" value="XM_006696456.1"/>
</dbReference>
<dbReference type="PDB" id="6YUC">
    <property type="method" value="X-ray"/>
    <property type="resolution" value="3.15 A"/>
    <property type="chains" value="G=10-110"/>
</dbReference>
<dbReference type="PDB" id="6Z6S">
    <property type="method" value="X-ray"/>
    <property type="resolution" value="3.15 A"/>
    <property type="chains" value="GGG=10-110"/>
</dbReference>
<dbReference type="PDB" id="7Q5N">
    <property type="method" value="X-ray"/>
    <property type="resolution" value="2.50 A"/>
    <property type="chains" value="G/H/I/J/K/L=2-110"/>
</dbReference>
<dbReference type="PDBsum" id="6YUC"/>
<dbReference type="PDBsum" id="6Z6S"/>
<dbReference type="PDBsum" id="7Q5N"/>
<dbReference type="EMDB" id="EMD-19967"/>
<dbReference type="SMR" id="G0SE11"/>
<dbReference type="STRING" id="759272.G0SE11"/>
<dbReference type="GeneID" id="18260241"/>
<dbReference type="KEGG" id="cthr:CTHT_0062030"/>
<dbReference type="eggNOG" id="KOG4146">
    <property type="taxonomic scope" value="Eukaryota"/>
</dbReference>
<dbReference type="HOGENOM" id="CLU_148208_0_0_1"/>
<dbReference type="OMA" id="DYELQPN"/>
<dbReference type="OrthoDB" id="10248987at2759"/>
<dbReference type="UniPathway" id="UPA00988"/>
<dbReference type="Proteomes" id="UP000008066">
    <property type="component" value="Unassembled WGS sequence"/>
</dbReference>
<dbReference type="GO" id="GO:0005829">
    <property type="term" value="C:cytosol"/>
    <property type="evidence" value="ECO:0007669"/>
    <property type="project" value="UniProtKB-UniRule"/>
</dbReference>
<dbReference type="GO" id="GO:0046872">
    <property type="term" value="F:metal ion binding"/>
    <property type="evidence" value="ECO:0007669"/>
    <property type="project" value="UniProtKB-KW"/>
</dbReference>
<dbReference type="GO" id="GO:0032447">
    <property type="term" value="P:protein urmylation"/>
    <property type="evidence" value="ECO:0007669"/>
    <property type="project" value="UniProtKB-UniRule"/>
</dbReference>
<dbReference type="GO" id="GO:0034227">
    <property type="term" value="P:tRNA thio-modification"/>
    <property type="evidence" value="ECO:0007669"/>
    <property type="project" value="UniProtKB-UniRule"/>
</dbReference>
<dbReference type="GO" id="GO:0002098">
    <property type="term" value="P:tRNA wobble uridine modification"/>
    <property type="evidence" value="ECO:0007669"/>
    <property type="project" value="UniProtKB-UniRule"/>
</dbReference>
<dbReference type="CDD" id="cd01764">
    <property type="entry name" value="Ubl_Urm1"/>
    <property type="match status" value="1"/>
</dbReference>
<dbReference type="Gene3D" id="3.10.20.30">
    <property type="match status" value="1"/>
</dbReference>
<dbReference type="HAMAP" id="MF_03048">
    <property type="entry name" value="Urm1"/>
    <property type="match status" value="1"/>
</dbReference>
<dbReference type="InterPro" id="IPR012675">
    <property type="entry name" value="Beta-grasp_dom_sf"/>
</dbReference>
<dbReference type="InterPro" id="IPR016155">
    <property type="entry name" value="Mopterin_synth/thiamin_S_b"/>
</dbReference>
<dbReference type="InterPro" id="IPR015221">
    <property type="entry name" value="Urm1"/>
</dbReference>
<dbReference type="PANTHER" id="PTHR14986">
    <property type="entry name" value="RURM1 PROTEIN"/>
    <property type="match status" value="1"/>
</dbReference>
<dbReference type="Pfam" id="PF09138">
    <property type="entry name" value="Urm1"/>
    <property type="match status" value="1"/>
</dbReference>
<dbReference type="PIRSF" id="PIRSF037379">
    <property type="entry name" value="Ubiquitin-related_modifier_1"/>
    <property type="match status" value="1"/>
</dbReference>
<dbReference type="SUPFAM" id="SSF54285">
    <property type="entry name" value="MoaD/ThiS"/>
    <property type="match status" value="1"/>
</dbReference>
<accession>G0SE11</accession>